<dbReference type="EC" id="2.7.7.6" evidence="1"/>
<dbReference type="EMBL" id="L77117">
    <property type="protein sequence ID" value="AAB99042.1"/>
    <property type="molecule type" value="Genomic_DNA"/>
</dbReference>
<dbReference type="PIR" id="F64429">
    <property type="entry name" value="F64429"/>
</dbReference>
<dbReference type="RefSeq" id="WP_010870552.1">
    <property type="nucleotide sequence ID" value="NC_000909.1"/>
</dbReference>
<dbReference type="PDB" id="1HMJ">
    <property type="method" value="NMR"/>
    <property type="chains" value="A=1-78"/>
</dbReference>
<dbReference type="PDBsum" id="1HMJ"/>
<dbReference type="BMRB" id="Q58443"/>
<dbReference type="SMR" id="Q58443"/>
<dbReference type="FunCoup" id="Q58443">
    <property type="interactions" value="2"/>
</dbReference>
<dbReference type="STRING" id="243232.MJ_1039"/>
<dbReference type="PaxDb" id="243232-MJ_1039"/>
<dbReference type="EnsemblBacteria" id="AAB99042">
    <property type="protein sequence ID" value="AAB99042"/>
    <property type="gene ID" value="MJ_1039"/>
</dbReference>
<dbReference type="GeneID" id="1451936"/>
<dbReference type="KEGG" id="mja:MJ_1039"/>
<dbReference type="eggNOG" id="arCOG04258">
    <property type="taxonomic scope" value="Archaea"/>
</dbReference>
<dbReference type="HOGENOM" id="CLU_058320_4_0_2"/>
<dbReference type="InParanoid" id="Q58443"/>
<dbReference type="OrthoDB" id="30537at2157"/>
<dbReference type="PhylomeDB" id="Q58443"/>
<dbReference type="EvolutionaryTrace" id="Q58443"/>
<dbReference type="Proteomes" id="UP000000805">
    <property type="component" value="Chromosome"/>
</dbReference>
<dbReference type="GO" id="GO:0005737">
    <property type="term" value="C:cytoplasm"/>
    <property type="evidence" value="ECO:0007669"/>
    <property type="project" value="UniProtKB-SubCell"/>
</dbReference>
<dbReference type="GO" id="GO:0000428">
    <property type="term" value="C:DNA-directed RNA polymerase complex"/>
    <property type="evidence" value="ECO:0007669"/>
    <property type="project" value="UniProtKB-KW"/>
</dbReference>
<dbReference type="GO" id="GO:0003677">
    <property type="term" value="F:DNA binding"/>
    <property type="evidence" value="ECO:0007669"/>
    <property type="project" value="InterPro"/>
</dbReference>
<dbReference type="GO" id="GO:0003899">
    <property type="term" value="F:DNA-directed RNA polymerase activity"/>
    <property type="evidence" value="ECO:0007669"/>
    <property type="project" value="UniProtKB-UniRule"/>
</dbReference>
<dbReference type="GO" id="GO:0006351">
    <property type="term" value="P:DNA-templated transcription"/>
    <property type="evidence" value="ECO:0007669"/>
    <property type="project" value="UniProtKB-UniRule"/>
</dbReference>
<dbReference type="Gene3D" id="3.90.940.20">
    <property type="entry name" value="RPB5-like RNA polymerase subunit"/>
    <property type="match status" value="1"/>
</dbReference>
<dbReference type="HAMAP" id="MF_00025">
    <property type="entry name" value="RNApol_Rpo5_RPB5"/>
    <property type="match status" value="1"/>
</dbReference>
<dbReference type="InterPro" id="IPR014381">
    <property type="entry name" value="Arch_Rpo5/euc_Rpb5"/>
</dbReference>
<dbReference type="InterPro" id="IPR000783">
    <property type="entry name" value="RNA_pol_subH/Rpb5_C"/>
</dbReference>
<dbReference type="InterPro" id="IPR020608">
    <property type="entry name" value="RNA_pol_subH/Rpb5_CS"/>
</dbReference>
<dbReference type="InterPro" id="IPR035913">
    <property type="entry name" value="RPB5-like_sf"/>
</dbReference>
<dbReference type="NCBIfam" id="NF007129">
    <property type="entry name" value="PRK09570.1"/>
    <property type="match status" value="1"/>
</dbReference>
<dbReference type="PANTHER" id="PTHR10535">
    <property type="entry name" value="DNA-DIRECTED RNA POLYMERASES I, II, AND III SUBUNIT RPABC1"/>
    <property type="match status" value="1"/>
</dbReference>
<dbReference type="PANTHER" id="PTHR10535:SF0">
    <property type="entry name" value="DNA-DIRECTED RNA POLYMERASES I, II, AND III SUBUNIT RPABC1"/>
    <property type="match status" value="1"/>
</dbReference>
<dbReference type="Pfam" id="PF01191">
    <property type="entry name" value="RNA_pol_Rpb5_C"/>
    <property type="match status" value="1"/>
</dbReference>
<dbReference type="SUPFAM" id="SSF55287">
    <property type="entry name" value="RPB5-like RNA polymerase subunit"/>
    <property type="match status" value="1"/>
</dbReference>
<dbReference type="PROSITE" id="PS01110">
    <property type="entry name" value="RNA_POL_H_23KD"/>
    <property type="match status" value="1"/>
</dbReference>
<sequence>MKVTDHILVPKHEIVPKEEVEEILKRYNIKIQQLPKIYEDDPVIQEIGAKEGDVVRVIRKSPTAGVSIAYRLVIKRII</sequence>
<protein>
    <recommendedName>
        <fullName evidence="1">DNA-directed RNA polymerase subunit Rpo5</fullName>
        <ecNumber evidence="1">2.7.7.6</ecNumber>
    </recommendedName>
    <alternativeName>
        <fullName evidence="1">DNA-directed RNA polymerase subunit H</fullName>
    </alternativeName>
</protein>
<proteinExistence type="evidence at protein level"/>
<organism>
    <name type="scientific">Methanocaldococcus jannaschii (strain ATCC 43067 / DSM 2661 / JAL-1 / JCM 10045 / NBRC 100440)</name>
    <name type="common">Methanococcus jannaschii</name>
    <dbReference type="NCBI Taxonomy" id="243232"/>
    <lineage>
        <taxon>Archaea</taxon>
        <taxon>Methanobacteriati</taxon>
        <taxon>Methanobacteriota</taxon>
        <taxon>Methanomada group</taxon>
        <taxon>Methanococci</taxon>
        <taxon>Methanococcales</taxon>
        <taxon>Methanocaldococcaceae</taxon>
        <taxon>Methanocaldococcus</taxon>
    </lineage>
</organism>
<keyword id="KW-0002">3D-structure</keyword>
<keyword id="KW-0963">Cytoplasm</keyword>
<keyword id="KW-0240">DNA-directed RNA polymerase</keyword>
<keyword id="KW-0548">Nucleotidyltransferase</keyword>
<keyword id="KW-1185">Reference proteome</keyword>
<keyword id="KW-0804">Transcription</keyword>
<keyword id="KW-0808">Transferase</keyword>
<name>RPO5_METJA</name>
<comment type="function">
    <text evidence="1">DNA-dependent RNA polymerase (RNAP) catalyzes the transcription of DNA into RNA using the four ribonucleoside triphosphates as substrates.</text>
</comment>
<comment type="catalytic activity">
    <reaction evidence="1">
        <text>RNA(n) + a ribonucleoside 5'-triphosphate = RNA(n+1) + diphosphate</text>
        <dbReference type="Rhea" id="RHEA:21248"/>
        <dbReference type="Rhea" id="RHEA-COMP:14527"/>
        <dbReference type="Rhea" id="RHEA-COMP:17342"/>
        <dbReference type="ChEBI" id="CHEBI:33019"/>
        <dbReference type="ChEBI" id="CHEBI:61557"/>
        <dbReference type="ChEBI" id="CHEBI:140395"/>
        <dbReference type="EC" id="2.7.7.6"/>
    </reaction>
</comment>
<comment type="subunit">
    <text evidence="1">Part of the RNA polymerase complex.</text>
</comment>
<comment type="subcellular location">
    <subcellularLocation>
        <location evidence="1">Cytoplasm</location>
    </subcellularLocation>
</comment>
<comment type="similarity">
    <text evidence="1">Belongs to the archaeal Rpo5/eukaryotic RPB5 RNA polymerase subunit family.</text>
</comment>
<reference key="1">
    <citation type="journal article" date="1996" name="Science">
        <title>Complete genome sequence of the methanogenic archaeon, Methanococcus jannaschii.</title>
        <authorList>
            <person name="Bult C.J."/>
            <person name="White O."/>
            <person name="Olsen G.J."/>
            <person name="Zhou L."/>
            <person name="Fleischmann R.D."/>
            <person name="Sutton G.G."/>
            <person name="Blake J.A."/>
            <person name="FitzGerald L.M."/>
            <person name="Clayton R.A."/>
            <person name="Gocayne J.D."/>
            <person name="Kerlavage A.R."/>
            <person name="Dougherty B.A."/>
            <person name="Tomb J.-F."/>
            <person name="Adams M.D."/>
            <person name="Reich C.I."/>
            <person name="Overbeek R."/>
            <person name="Kirkness E.F."/>
            <person name="Weinstock K.G."/>
            <person name="Merrick J.M."/>
            <person name="Glodek A."/>
            <person name="Scott J.L."/>
            <person name="Geoghagen N.S.M."/>
            <person name="Weidman J.F."/>
            <person name="Fuhrmann J.L."/>
            <person name="Nguyen D."/>
            <person name="Utterback T.R."/>
            <person name="Kelley J.M."/>
            <person name="Peterson J.D."/>
            <person name="Sadow P.W."/>
            <person name="Hanna M.C."/>
            <person name="Cotton M.D."/>
            <person name="Roberts K.M."/>
            <person name="Hurst M.A."/>
            <person name="Kaine B.P."/>
            <person name="Borodovsky M."/>
            <person name="Klenk H.-P."/>
            <person name="Fraser C.M."/>
            <person name="Smith H.O."/>
            <person name="Woese C.R."/>
            <person name="Venter J.C."/>
        </authorList>
    </citation>
    <scope>NUCLEOTIDE SEQUENCE [LARGE SCALE GENOMIC DNA]</scope>
    <source>
        <strain>ATCC 43067 / DSM 2661 / JAL-1 / JCM 10045 / NBRC 100440</strain>
    </source>
</reference>
<reference key="2">
    <citation type="journal article" date="1999" name="J. Mol. Biol.">
        <title>RNA polymerase subunit H features a beta-ribbon motif within a novel fold that is present in archaea and eukaryotes.</title>
        <authorList>
            <person name="Thiru A."/>
            <person name="Hodach M."/>
            <person name="Eloranta J.J."/>
            <person name="Kostourou V."/>
            <person name="Weinzierl R.O."/>
            <person name="Matthews S."/>
        </authorList>
    </citation>
    <scope>STRUCTURE BY NMR</scope>
</reference>
<feature type="chain" id="PRO_0000146092" description="DNA-directed RNA polymerase subunit Rpo5">
    <location>
        <begin position="1"/>
        <end position="78"/>
    </location>
</feature>
<evidence type="ECO:0000255" key="1">
    <source>
        <dbReference type="HAMAP-Rule" id="MF_00025"/>
    </source>
</evidence>
<gene>
    <name evidence="1" type="primary">rpo5</name>
    <name evidence="1" type="synonym">rpoH</name>
    <name type="ordered locus">MJ1039</name>
</gene>
<accession>Q58443</accession>